<evidence type="ECO:0000250" key="1">
    <source>
        <dbReference type="UniProtKB" id="P13849"/>
    </source>
</evidence>
<evidence type="ECO:0000255" key="2"/>
<evidence type="ECO:0000305" key="3"/>
<comment type="function">
    <text evidence="1">Assembles to form a prolate capsid shell of about 54 nm in length and 45 nm in width, with a T=3, Q=5 symmetry.</text>
</comment>
<comment type="subunit">
    <text evidence="1">Homohexamer. Homopentamer. The prolate capsid is composed of pentamers and hexamers of the capsid protein.</text>
</comment>
<comment type="subcellular location">
    <subcellularLocation>
        <location evidence="1">Virion</location>
    </subcellularLocation>
    <text evidence="1">Present in about 235 copies in the virion.</text>
</comment>
<comment type="similarity">
    <text evidence="3">Belongs to the phi29likevirus major capsid protein family.</text>
</comment>
<proteinExistence type="inferred from homology"/>
<name>CAPSD_BPPZA</name>
<keyword id="KW-0167">Capsid protein</keyword>
<keyword id="KW-0175">Coiled coil</keyword>
<keyword id="KW-0426">Late protein</keyword>
<keyword id="KW-1142">T=3 icosahedral capsid protein</keyword>
<keyword id="KW-0946">Virion</keyword>
<gene>
    <name type="primary">8</name>
</gene>
<dbReference type="EMBL" id="M11813">
    <property type="protein sequence ID" value="AAA88484.1"/>
    <property type="molecule type" value="Genomic_DNA"/>
</dbReference>
<dbReference type="PIR" id="B24831">
    <property type="entry name" value="WMBP8Z"/>
</dbReference>
<dbReference type="SMR" id="P07531"/>
<dbReference type="Proteomes" id="UP000000855">
    <property type="component" value="Segment"/>
</dbReference>
<dbReference type="GO" id="GO:0039617">
    <property type="term" value="C:T=3 icosahedral viral capsid"/>
    <property type="evidence" value="ECO:0007669"/>
    <property type="project" value="UniProtKB-KW"/>
</dbReference>
<dbReference type="Gene3D" id="2.60.40.1080">
    <property type="match status" value="1"/>
</dbReference>
<dbReference type="InterPro" id="IPR003343">
    <property type="entry name" value="Big_2"/>
</dbReference>
<dbReference type="Pfam" id="PF02368">
    <property type="entry name" value="Big_2"/>
    <property type="match status" value="1"/>
</dbReference>
<dbReference type="SMART" id="SM00635">
    <property type="entry name" value="BID_2"/>
    <property type="match status" value="1"/>
</dbReference>
<protein>
    <recommendedName>
        <fullName evidence="1">Major capsid protein</fullName>
    </recommendedName>
    <alternativeName>
        <fullName evidence="1">Gene product 8</fullName>
        <shortName evidence="1">gp8</shortName>
    </alternativeName>
    <alternativeName>
        <fullName evidence="3">Major head protein</fullName>
    </alternativeName>
    <alternativeName>
        <fullName evidence="1">Protein p8</fullName>
    </alternativeName>
</protein>
<organismHost>
    <name type="scientific">Bacillus subtilis</name>
    <dbReference type="NCBI Taxonomy" id="1423"/>
</organismHost>
<reference key="1">
    <citation type="journal article" date="1986" name="Gene">
        <title>Nucleotide sequence of the late region of Bacillus subtilis phage PZA, a close relative of phi 29.</title>
        <authorList>
            <person name="Paces V."/>
            <person name="Vlcek C."/>
            <person name="Urbanek P."/>
        </authorList>
    </citation>
    <scope>NUCLEOTIDE SEQUENCE [GENOMIC DNA]</scope>
</reference>
<organism>
    <name type="scientific">Bacillus phage PZA</name>
    <name type="common">Bacteriophage PZA</name>
    <dbReference type="NCBI Taxonomy" id="10757"/>
    <lineage>
        <taxon>Viruses</taxon>
        <taxon>Duplodnaviria</taxon>
        <taxon>Heunggongvirae</taxon>
        <taxon>Uroviricota</taxon>
        <taxon>Caudoviricetes</taxon>
        <taxon>Salasmaviridae</taxon>
        <taxon>Picovirinae</taxon>
        <taxon>Salasvirus</taxon>
        <taxon>Salasvirus PZA</taxon>
    </lineage>
</organism>
<feature type="chain" id="PRO_0000106576" description="Major capsid protein">
    <location>
        <begin position="1"/>
        <end position="448"/>
    </location>
</feature>
<feature type="domain" description="BIG2" evidence="2">
    <location>
        <begin position="348"/>
        <end position="425"/>
    </location>
</feature>
<feature type="coiled-coil region" evidence="2">
    <location>
        <begin position="104"/>
        <end position="127"/>
    </location>
</feature>
<sequence>MRITFNDVKTSLGITESYDIVNAIRNSQGDSFKSYVPLATADNVAEVGAGILINQTVQNDFITSLVDRIGLVVIRQVSLNNPLKKFKKGQIPLGRTIEEIYTDITKEKQYDAEEAEHKVFEREMPNVKTLFHERNRQGFYHQTIQDDSLKTAFVSWGNFESFVSSIINAIYNSAEVDEYEYMKLLVDNYYSKGLFTTVKIDEPTSSTGALTEFVKKMRATARKLTLPQGSRDWNSMAVRTRSYMEDLHLIIDADLEAELDVDVLAKAFNMNRTDFLGNVTVIDGFASTGLEAVLVDKDWFMVYDNLHKMETVRNPRGLYWNYYYHVWQTLSVSRSANAVAFVSGDVPAVTQVIVSPNIAAVKQGGKQQFTAYVRATDGKDHKVVWSVEGGSTGTAITGDGLLSVSGNEENQLTVKATVDIGTEDKPNLVVGEAVVSIRPNNASGGAQA</sequence>
<accession>P07531</accession>